<gene>
    <name type="primary">TSC3</name>
    <name type="ordered locus">KLLA0F18634g</name>
</gene>
<sequence>MAAEKIYEPYKKSRGTMIYTPTNQQMSRGGIGEKLADFVKNLYWVYYIHLPFYLMTSLDAFCLHTIFLVVVSLSLFGLLKYIFL</sequence>
<comment type="function">
    <text evidence="1">Stimulates the activity of serine palmitoyltransferase (SPT), and thus plays a role in the biosynthesis of sphingolipids.</text>
</comment>
<comment type="subcellular location">
    <subcellularLocation>
        <location evidence="1">Endoplasmic reticulum membrane</location>
        <topology evidence="1">Single-pass membrane protein</topology>
    </subcellularLocation>
</comment>
<feature type="chain" id="PRO_0000076357" description="Serine palmitoyltransferase-regulating protein TSC3">
    <location>
        <begin position="1"/>
        <end position="84"/>
    </location>
</feature>
<feature type="transmembrane region" description="Helical" evidence="2">
    <location>
        <begin position="63"/>
        <end position="83"/>
    </location>
</feature>
<name>TSC3_KLULA</name>
<evidence type="ECO:0000250" key="1">
    <source>
        <dbReference type="UniProtKB" id="Q3E790"/>
    </source>
</evidence>
<evidence type="ECO:0000255" key="2"/>
<dbReference type="EMBL" id="CR382126">
    <property type="protein sequence ID" value="CAG98623.1"/>
    <property type="molecule type" value="Genomic_DNA"/>
</dbReference>
<dbReference type="RefSeq" id="XP_455915.1">
    <property type="nucleotide sequence ID" value="XM_455915.1"/>
</dbReference>
<dbReference type="SMR" id="Q6CJH4"/>
<dbReference type="FunCoup" id="Q6CJH4">
    <property type="interactions" value="6"/>
</dbReference>
<dbReference type="STRING" id="284590.Q6CJH4"/>
<dbReference type="PaxDb" id="284590-Q6CJH4"/>
<dbReference type="KEGG" id="kla:KLLA0_F18634g"/>
<dbReference type="eggNOG" id="ENOG502S91C">
    <property type="taxonomic scope" value="Eukaryota"/>
</dbReference>
<dbReference type="HOGENOM" id="CLU_176405_0_0_1"/>
<dbReference type="InParanoid" id="Q6CJH4"/>
<dbReference type="OMA" id="YYVHLPF"/>
<dbReference type="Proteomes" id="UP000000598">
    <property type="component" value="Chromosome F"/>
</dbReference>
<dbReference type="GO" id="GO:0005789">
    <property type="term" value="C:endoplasmic reticulum membrane"/>
    <property type="evidence" value="ECO:0007669"/>
    <property type="project" value="UniProtKB-SubCell"/>
</dbReference>
<reference key="1">
    <citation type="journal article" date="2004" name="Nature">
        <title>Genome evolution in yeasts.</title>
        <authorList>
            <person name="Dujon B."/>
            <person name="Sherman D."/>
            <person name="Fischer G."/>
            <person name="Durrens P."/>
            <person name="Casaregola S."/>
            <person name="Lafontaine I."/>
            <person name="de Montigny J."/>
            <person name="Marck C."/>
            <person name="Neuveglise C."/>
            <person name="Talla E."/>
            <person name="Goffard N."/>
            <person name="Frangeul L."/>
            <person name="Aigle M."/>
            <person name="Anthouard V."/>
            <person name="Babour A."/>
            <person name="Barbe V."/>
            <person name="Barnay S."/>
            <person name="Blanchin S."/>
            <person name="Beckerich J.-M."/>
            <person name="Beyne E."/>
            <person name="Bleykasten C."/>
            <person name="Boisrame A."/>
            <person name="Boyer J."/>
            <person name="Cattolico L."/>
            <person name="Confanioleri F."/>
            <person name="de Daruvar A."/>
            <person name="Despons L."/>
            <person name="Fabre E."/>
            <person name="Fairhead C."/>
            <person name="Ferry-Dumazet H."/>
            <person name="Groppi A."/>
            <person name="Hantraye F."/>
            <person name="Hennequin C."/>
            <person name="Jauniaux N."/>
            <person name="Joyet P."/>
            <person name="Kachouri R."/>
            <person name="Kerrest A."/>
            <person name="Koszul R."/>
            <person name="Lemaire M."/>
            <person name="Lesur I."/>
            <person name="Ma L."/>
            <person name="Muller H."/>
            <person name="Nicaud J.-M."/>
            <person name="Nikolski M."/>
            <person name="Oztas S."/>
            <person name="Ozier-Kalogeropoulos O."/>
            <person name="Pellenz S."/>
            <person name="Potier S."/>
            <person name="Richard G.-F."/>
            <person name="Straub M.-L."/>
            <person name="Suleau A."/>
            <person name="Swennen D."/>
            <person name="Tekaia F."/>
            <person name="Wesolowski-Louvel M."/>
            <person name="Westhof E."/>
            <person name="Wirth B."/>
            <person name="Zeniou-Meyer M."/>
            <person name="Zivanovic Y."/>
            <person name="Bolotin-Fukuhara M."/>
            <person name="Thierry A."/>
            <person name="Bouchier C."/>
            <person name="Caudron B."/>
            <person name="Scarpelli C."/>
            <person name="Gaillardin C."/>
            <person name="Weissenbach J."/>
            <person name="Wincker P."/>
            <person name="Souciet J.-L."/>
        </authorList>
    </citation>
    <scope>NUCLEOTIDE SEQUENCE [LARGE SCALE GENOMIC DNA]</scope>
    <source>
        <strain>ATCC 8585 / CBS 2359 / DSM 70799 / NBRC 1267 / NRRL Y-1140 / WM37</strain>
    </source>
</reference>
<proteinExistence type="inferred from homology"/>
<keyword id="KW-0256">Endoplasmic reticulum</keyword>
<keyword id="KW-0472">Membrane</keyword>
<keyword id="KW-1185">Reference proteome</keyword>
<keyword id="KW-0812">Transmembrane</keyword>
<keyword id="KW-1133">Transmembrane helix</keyword>
<protein>
    <recommendedName>
        <fullName>Serine palmitoyltransferase-regulating protein TSC3</fullName>
    </recommendedName>
</protein>
<organism>
    <name type="scientific">Kluyveromyces lactis (strain ATCC 8585 / CBS 2359 / DSM 70799 / NBRC 1267 / NRRL Y-1140 / WM37)</name>
    <name type="common">Yeast</name>
    <name type="synonym">Candida sphaerica</name>
    <dbReference type="NCBI Taxonomy" id="284590"/>
    <lineage>
        <taxon>Eukaryota</taxon>
        <taxon>Fungi</taxon>
        <taxon>Dikarya</taxon>
        <taxon>Ascomycota</taxon>
        <taxon>Saccharomycotina</taxon>
        <taxon>Saccharomycetes</taxon>
        <taxon>Saccharomycetales</taxon>
        <taxon>Saccharomycetaceae</taxon>
        <taxon>Kluyveromyces</taxon>
    </lineage>
</organism>
<accession>Q6CJH4</accession>